<comment type="function">
    <text evidence="6 7 8 9">Dual histone methylation reader specific for PRDM9-catalyzed histone marks (H3K4me3 and H3K36me3) that facilitates the repair of PRDM9-induced meiotic double-strand breaks (DSBs) (PubMed:32352380, PubMed:32374261, PubMed:32744506). Essential for male fertility and spermatogenesis (PubMed:31453335, PubMed:32352380, PubMed:32374261, PubMed:32744506). Required for meiosis prophase I progression in male but not in female germ cells (PubMed:31453335).</text>
</comment>
<comment type="subcellular location">
    <subcellularLocation>
        <location evidence="6 8 9">Nucleus</location>
    </subcellularLocation>
    <subcellularLocation>
        <location evidence="6 9">Chromosome</location>
    </subcellularLocation>
</comment>
<comment type="tissue specificity">
    <text evidence="6 7 8 9">Testis (at protein level) (PubMed:31453335, PubMed:32352380, PubMed:32374261, PubMed:32744506). Expressed in thymus, brain, lung, ovary, oviduct and uterus (PubMed:31453335).</text>
</comment>
<comment type="domain">
    <text evidence="1">The CW-TYPE zinc finger mediates its binding to trimethylated histone H3K4me3.</text>
</comment>
<comment type="disruption phenotype">
    <text evidence="6 7 8 9">Male mice are sterile with complete azoospermia and reduced testis size, show impaired spermatogenesis, spermatocytes display meiotic arrest at around the zygotene to pachytene stage with incomplete homologous synapsis which is accompanied by defective DNA double-strand breaks repair (PubMed:31453335, PubMed:32352380, PubMed:32374261, PubMed:32744506). Fertility of females is normal up to mid-adulthood (5 to 6 months of age), at 3 and 6 months, ovaries exhibit healthy ovarian morphologies, however ovaries are devoid of follicles at around 8 months of age, and accordingly female mice become infertile (PubMed:31453335, PubMed:32744506). Female germ cells exhibit a successful but delayed meiosis prophase I progression (PubMed:31453335).</text>
</comment>
<organism>
    <name type="scientific">Mus musculus</name>
    <name type="common">Mouse</name>
    <dbReference type="NCBI Taxonomy" id="10090"/>
    <lineage>
        <taxon>Eukaryota</taxon>
        <taxon>Metazoa</taxon>
        <taxon>Chordata</taxon>
        <taxon>Craniata</taxon>
        <taxon>Vertebrata</taxon>
        <taxon>Euteleostomi</taxon>
        <taxon>Mammalia</taxon>
        <taxon>Eutheria</taxon>
        <taxon>Euarchontoglires</taxon>
        <taxon>Glires</taxon>
        <taxon>Rodentia</taxon>
        <taxon>Myomorpha</taxon>
        <taxon>Muroidea</taxon>
        <taxon>Muridae</taxon>
        <taxon>Murinae</taxon>
        <taxon>Mus</taxon>
        <taxon>Mus</taxon>
    </lineage>
</organism>
<proteinExistence type="evidence at protein level"/>
<gene>
    <name type="primary">Zcwpw1</name>
    <name type="synonym">Gm1053</name>
</gene>
<accession>Q6IR42</accession>
<accession>Q2YFS4</accession>
<protein>
    <recommendedName>
        <fullName>Zinc finger CW-type PWWP domain protein 1</fullName>
    </recommendedName>
</protein>
<evidence type="ECO:0000250" key="1">
    <source>
        <dbReference type="UniProtKB" id="Q9H0M4"/>
    </source>
</evidence>
<evidence type="ECO:0000255" key="2"/>
<evidence type="ECO:0000255" key="3">
    <source>
        <dbReference type="PROSITE-ProRule" id="PRU00162"/>
    </source>
</evidence>
<evidence type="ECO:0000255" key="4">
    <source>
        <dbReference type="PROSITE-ProRule" id="PRU00454"/>
    </source>
</evidence>
<evidence type="ECO:0000256" key="5">
    <source>
        <dbReference type="SAM" id="MobiDB-lite"/>
    </source>
</evidence>
<evidence type="ECO:0000269" key="6">
    <source>
    </source>
</evidence>
<evidence type="ECO:0000269" key="7">
    <source>
    </source>
</evidence>
<evidence type="ECO:0000269" key="8">
    <source>
    </source>
</evidence>
<evidence type="ECO:0000269" key="9">
    <source>
    </source>
</evidence>
<evidence type="ECO:0000305" key="10"/>
<evidence type="ECO:0007744" key="11">
    <source>
    </source>
</evidence>
<name>ZCPW1_MOUSE</name>
<keyword id="KW-0158">Chromosome</keyword>
<keyword id="KW-0175">Coiled coil</keyword>
<keyword id="KW-0221">Differentiation</keyword>
<keyword id="KW-0479">Metal-binding</keyword>
<keyword id="KW-0539">Nucleus</keyword>
<keyword id="KW-0597">Phosphoprotein</keyword>
<keyword id="KW-1185">Reference proteome</keyword>
<keyword id="KW-0744">Spermatogenesis</keyword>
<keyword id="KW-0862">Zinc</keyword>
<keyword id="KW-0863">Zinc-finger</keyword>
<feature type="chain" id="PRO_0000066568" description="Zinc finger CW-type PWWP domain protein 1">
    <location>
        <begin position="1"/>
        <end position="630"/>
    </location>
</feature>
<feature type="domain" description="PWWP" evidence="3">
    <location>
        <begin position="308"/>
        <end position="374"/>
    </location>
</feature>
<feature type="zinc finger region" description="CW-type" evidence="4">
    <location>
        <begin position="241"/>
        <end position="295"/>
    </location>
</feature>
<feature type="region of interest" description="Disordered" evidence="5">
    <location>
        <begin position="1"/>
        <end position="99"/>
    </location>
</feature>
<feature type="region of interest" description="Disordered" evidence="5">
    <location>
        <begin position="130"/>
        <end position="184"/>
    </location>
</feature>
<feature type="region of interest" description="Disordered" evidence="5">
    <location>
        <begin position="430"/>
        <end position="595"/>
    </location>
</feature>
<feature type="coiled-coil region" evidence="2">
    <location>
        <begin position="435"/>
        <end position="465"/>
    </location>
</feature>
<feature type="compositionally biased region" description="Basic and acidic residues" evidence="5">
    <location>
        <begin position="26"/>
        <end position="40"/>
    </location>
</feature>
<feature type="compositionally biased region" description="Basic and acidic residues" evidence="5">
    <location>
        <begin position="59"/>
        <end position="81"/>
    </location>
</feature>
<feature type="compositionally biased region" description="Basic and acidic residues" evidence="5">
    <location>
        <begin position="141"/>
        <end position="152"/>
    </location>
</feature>
<feature type="compositionally biased region" description="Acidic residues" evidence="5">
    <location>
        <begin position="449"/>
        <end position="459"/>
    </location>
</feature>
<feature type="compositionally biased region" description="Basic and acidic residues" evidence="5">
    <location>
        <begin position="514"/>
        <end position="527"/>
    </location>
</feature>
<feature type="binding site" evidence="4">
    <location>
        <position position="250"/>
    </location>
    <ligand>
        <name>Zn(2+)</name>
        <dbReference type="ChEBI" id="CHEBI:29105"/>
    </ligand>
</feature>
<feature type="binding site" evidence="4">
    <location>
        <position position="255"/>
    </location>
    <ligand>
        <name>Zn(2+)</name>
        <dbReference type="ChEBI" id="CHEBI:29105"/>
    </ligand>
</feature>
<feature type="binding site" evidence="4">
    <location>
        <position position="276"/>
    </location>
    <ligand>
        <name>Zn(2+)</name>
        <dbReference type="ChEBI" id="CHEBI:29105"/>
    </ligand>
</feature>
<feature type="binding site" evidence="4">
    <location>
        <position position="287"/>
    </location>
    <ligand>
        <name>Zn(2+)</name>
        <dbReference type="ChEBI" id="CHEBI:29105"/>
    </ligand>
</feature>
<feature type="modified residue" description="Phosphoserine" evidence="11">
    <location>
        <position position="619"/>
    </location>
</feature>
<feature type="mutagenesis site" description="Knockin mice show impaired spermatogenesis, loss of histone H3K4me3 binding, severe disruption of chromosomal synapsis and DNA double-strand breaks repair in spermatocytes; when associated with R-292 and P-294." evidence="8">
    <original>W</original>
    <variation>I</variation>
    <location>
        <position position="247"/>
    </location>
</feature>
<feature type="mutagenesis site" description="Knockin mice show impaired spermatogenesis, loss of histone H3K4me3 binding, severe disruption of chromosomal synapsis and DNA double-strand breaks repair in spermatocytes; when associated with I-247 and P-294." evidence="8">
    <original>E</original>
    <variation>R</variation>
    <location>
        <position position="292"/>
    </location>
</feature>
<feature type="mutagenesis site" description="Knockin mice show impaired spermatogenesis, loss of histone H3K4me3 binding, severe disruption of chromosomal synapsis and DNA double-strand breaks repair in spermatocytes; when associated with I-247 and R-292." evidence="8">
    <original>W</original>
    <variation>P</variation>
    <location>
        <position position="294"/>
    </location>
</feature>
<feature type="sequence conflict" description="In Ref. 2; AAH71186." evidence="10" ref="2">
    <original>S</original>
    <variation>P</variation>
    <location>
        <position position="387"/>
    </location>
</feature>
<reference key="1">
    <citation type="journal article" date="2006" name="Physiol. Genomics">
        <title>Comparative analysis of the paired immunoglobulin-like receptor (PILR) locus in six mammalian genomes: duplication, conversion, and the birth of new genes.</title>
        <authorList>
            <person name="Wilson M.D."/>
            <person name="Cheung J."/>
            <person name="Martindale D.W."/>
            <person name="Scherer S.W."/>
            <person name="Koop B.F."/>
        </authorList>
    </citation>
    <scope>NUCLEOTIDE SEQUENCE [GENOMIC DNA]</scope>
    <source>
        <strain>129/Sv</strain>
    </source>
</reference>
<reference key="2">
    <citation type="journal article" date="2004" name="Genome Res.">
        <title>The status, quality, and expansion of the NIH full-length cDNA project: the Mammalian Gene Collection (MGC).</title>
        <authorList>
            <consortium name="The MGC Project Team"/>
        </authorList>
    </citation>
    <scope>NUCLEOTIDE SEQUENCE [LARGE SCALE MRNA]</scope>
    <source>
        <strain>C57BL/6J</strain>
        <tissue>Embryonic germ cell</tissue>
    </source>
</reference>
<reference key="3">
    <citation type="journal article" date="2010" name="Cell">
        <title>A tissue-specific atlas of mouse protein phosphorylation and expression.</title>
        <authorList>
            <person name="Huttlin E.L."/>
            <person name="Jedrychowski M.P."/>
            <person name="Elias J.E."/>
            <person name="Goswami T."/>
            <person name="Rad R."/>
            <person name="Beausoleil S.A."/>
            <person name="Villen J."/>
            <person name="Haas W."/>
            <person name="Sowa M.E."/>
            <person name="Gygi S.P."/>
        </authorList>
    </citation>
    <scope>PHOSPHORYLATION [LARGE SCALE ANALYSIS] AT SER-619</scope>
    <scope>IDENTIFICATION BY MASS SPECTROMETRY [LARGE SCALE ANALYSIS]</scope>
    <source>
        <tissue>Testis</tissue>
    </source>
</reference>
<reference key="4">
    <citation type="journal article" date="2019" name="Sci. Adv.">
        <title>The histone modification reader ZCWPW1 is required for meiosis prophase I in male but not in female mice.</title>
        <authorList>
            <person name="Li M."/>
            <person name="Huang T."/>
            <person name="Li M.J."/>
            <person name="Zhang C.X."/>
            <person name="Yu X.C."/>
            <person name="Yin Y.Y."/>
            <person name="Liu C."/>
            <person name="Wang X."/>
            <person name="Feng H.W."/>
            <person name="Zhang T."/>
            <person name="Liu M.F."/>
            <person name="Han C.S."/>
            <person name="Lu G."/>
            <person name="Li W."/>
            <person name="Ma J.L."/>
            <person name="Chen Z.J."/>
            <person name="Liu H.B."/>
            <person name="Liu K."/>
        </authorList>
    </citation>
    <scope>FUNCTION</scope>
    <scope>SUBCELLULAR LOCATION</scope>
    <scope>DISRUPTION PHENOTYPE</scope>
    <scope>TISSUE SPECIFICITY</scope>
</reference>
<reference key="5">
    <citation type="journal article" date="2020" name="Elife">
        <title>The histone modification reader ZCWPW1 links histone methylation to PRDM9-induced double-strand break repair.</title>
        <authorList>
            <person name="Huang T."/>
            <person name="Yuan S."/>
            <person name="Gao L."/>
            <person name="Li M."/>
            <person name="Yu X."/>
            <person name="Zhang J."/>
            <person name="Yin Y."/>
            <person name="Liu C."/>
            <person name="Zhang C."/>
            <person name="Lu G."/>
            <person name="Li W."/>
            <person name="Liu J."/>
            <person name="Chen Z.J."/>
            <person name="Liu H."/>
        </authorList>
    </citation>
    <scope>FUNCTION</scope>
    <scope>SUBCELLULAR LOCATION</scope>
    <scope>DISRUPTION PHENOTYPE</scope>
    <scope>TISSUE SPECIFICITY</scope>
    <scope>MUTAGENESIS OF TRP-247; GLU-292 AND TRP-294</scope>
</reference>
<reference key="6">
    <citation type="journal article" date="2020" name="Elife">
        <title>Dual histone methyl reader ZCWPW1 facilitates repair of meiotic double strand breaks in male mice.</title>
        <authorList>
            <person name="Mahgoub M."/>
            <person name="Paiano J."/>
            <person name="Bruno M."/>
            <person name="Wu W."/>
            <person name="Pathuri S."/>
            <person name="Zhang X."/>
            <person name="Ralls S."/>
            <person name="Cheng X."/>
            <person name="Nussenzweig A."/>
            <person name="Macfarlan T.S."/>
        </authorList>
    </citation>
    <scope>FUNCTION</scope>
    <scope>DISRUPTION PHENOTYPE</scope>
    <scope>TISSUE SPECIFICITY</scope>
</reference>
<reference key="7">
    <citation type="journal article" date="2020" name="Elife">
        <title>ZCWPW1 is recruited to recombination hotspots by PRDM9, and is essential for meiotic double strand break repair.</title>
        <authorList>
            <person name="Wells D."/>
            <person name="Bitoun E."/>
            <person name="Moralli D."/>
            <person name="Zhang G."/>
            <person name="Hinch A."/>
            <person name="Jankowska J."/>
            <person name="Donnelly P."/>
            <person name="Green C."/>
            <person name="Myers S.R."/>
        </authorList>
    </citation>
    <scope>FUNCTION</scope>
    <scope>SUBCELLULAR LOCATION</scope>
    <scope>DISRUPTION PHENOTYPE</scope>
    <scope>TISSUE SPECIFICITY</scope>
</reference>
<sequence>MMAALQTHKEYEKGTKKTFAPPTQKLHSEKPQPSSWKEDAPGTSSPEAETKPSLLKASLKKEQKPTTEHGPNRGQERKLKAQDQPAKKKGKERTLTSAEFEEIFQIVLQKSLQECLETSSCVQHIRPTKLDEEPGIVPPATDKKDADPEKVITPDTPKIASSLEEEVNSEMGTSKLGQPVTEPSKKKFNRLSLSKQKKKAEDEKMEKIQDGRECSLKEKQKIVIQDQSQIRGPQKEEESGFGHCVIWVQCSSPKCEKWRQLRGNIDPSVLPDDWSCDQNPDPNYNRCDIPEESWAGCESDVAYASYVPGSIIWAKQYGYPWWPGMIEADPDLGEYFLFASHLDSLPSKYHVTFFGETVSRAWIPVRMLKNFQELSLELVKKCKNKNSNQKLEAAIAMAHRAEQTSIQERVNLFGFWSRYNGADISEEGEDLTLCESNNPESCLEKEEKDLEEEKEEEEEKKDPTLPRPKPAKMQTKKPKSRGPAGGPDGTPKKKTAKKSLVSESTVPPVPTLGGKEEQGNSDLDHPVPKKKFKAPENKTSATNLSEEKEIKIVSKCPTPSAQHGACPLGKEGLVPHMPPTQEAASFPPDDDCSSDLDLEQLMEDIGEPEERGEMQQRGSSEEFLAALFEE</sequence>
<dbReference type="EMBL" id="AY823670">
    <property type="protein sequence ID" value="AAX39493.1"/>
    <property type="molecule type" value="Genomic_DNA"/>
</dbReference>
<dbReference type="EMBL" id="BC071186">
    <property type="protein sequence ID" value="AAH71186.1"/>
    <property type="molecule type" value="mRNA"/>
</dbReference>
<dbReference type="CCDS" id="CCDS19779.1"/>
<dbReference type="RefSeq" id="NP_001005426.2">
    <property type="nucleotide sequence ID" value="NM_001005426.2"/>
</dbReference>
<dbReference type="RefSeq" id="NP_001346952.1">
    <property type="nucleotide sequence ID" value="NM_001360023.1"/>
</dbReference>
<dbReference type="RefSeq" id="XP_006504647.1">
    <property type="nucleotide sequence ID" value="XM_006504584.3"/>
</dbReference>
<dbReference type="SMR" id="Q6IR42"/>
<dbReference type="FunCoup" id="Q6IR42">
    <property type="interactions" value="552"/>
</dbReference>
<dbReference type="STRING" id="10090.ENSMUSP00000048730"/>
<dbReference type="GlyGen" id="Q6IR42">
    <property type="glycosylation" value="1 site"/>
</dbReference>
<dbReference type="iPTMnet" id="Q6IR42"/>
<dbReference type="PhosphoSitePlus" id="Q6IR42"/>
<dbReference type="SwissPalm" id="Q6IR42"/>
<dbReference type="PaxDb" id="10090-ENSMUSP00000048730"/>
<dbReference type="ProteomicsDB" id="275060"/>
<dbReference type="Antibodypedia" id="8914">
    <property type="antibodies" value="63 antibodies from 16 providers"/>
</dbReference>
<dbReference type="Ensembl" id="ENSMUST00000035852.14">
    <property type="protein sequence ID" value="ENSMUSP00000048730.8"/>
    <property type="gene ID" value="ENSMUSG00000037108.14"/>
</dbReference>
<dbReference type="GeneID" id="381678"/>
<dbReference type="KEGG" id="mmu:381678"/>
<dbReference type="UCSC" id="uc009adz.2">
    <property type="organism name" value="mouse"/>
</dbReference>
<dbReference type="AGR" id="MGI:2685899"/>
<dbReference type="CTD" id="55063"/>
<dbReference type="MGI" id="MGI:2685899">
    <property type="gene designation" value="Zcwpw1"/>
</dbReference>
<dbReference type="VEuPathDB" id="HostDB:ENSMUSG00000037108"/>
<dbReference type="eggNOG" id="ENOG502QSQZ">
    <property type="taxonomic scope" value="Eukaryota"/>
</dbReference>
<dbReference type="GeneTree" id="ENSGT00560000077278"/>
<dbReference type="HOGENOM" id="CLU_029321_1_0_1"/>
<dbReference type="InParanoid" id="Q6IR42"/>
<dbReference type="OMA" id="CAQPIRC"/>
<dbReference type="OrthoDB" id="5964980at2759"/>
<dbReference type="PhylomeDB" id="Q6IR42"/>
<dbReference type="TreeFam" id="TF336904"/>
<dbReference type="BioGRID-ORCS" id="381678">
    <property type="hits" value="1 hit in 81 CRISPR screens"/>
</dbReference>
<dbReference type="ChiTaRS" id="Zcwpw1">
    <property type="organism name" value="mouse"/>
</dbReference>
<dbReference type="PRO" id="PR:Q6IR42"/>
<dbReference type="Proteomes" id="UP000000589">
    <property type="component" value="Chromosome 5"/>
</dbReference>
<dbReference type="RNAct" id="Q6IR42">
    <property type="molecule type" value="protein"/>
</dbReference>
<dbReference type="Bgee" id="ENSMUSG00000037108">
    <property type="expression patterns" value="Expressed in epiblast (generic) and 66 other cell types or tissues"/>
</dbReference>
<dbReference type="ExpressionAtlas" id="Q6IR42">
    <property type="expression patterns" value="baseline and differential"/>
</dbReference>
<dbReference type="GO" id="GO:0005634">
    <property type="term" value="C:nucleus"/>
    <property type="evidence" value="ECO:0000314"/>
    <property type="project" value="UniProtKB"/>
</dbReference>
<dbReference type="GO" id="GO:0001741">
    <property type="term" value="C:XY body"/>
    <property type="evidence" value="ECO:0000314"/>
    <property type="project" value="UniProtKB"/>
</dbReference>
<dbReference type="GO" id="GO:0140003">
    <property type="term" value="F:histone H3K36me3 reader activity"/>
    <property type="evidence" value="ECO:0000314"/>
    <property type="project" value="UniProtKB"/>
</dbReference>
<dbReference type="GO" id="GO:0140002">
    <property type="term" value="F:histone H3K4me3 reader activity"/>
    <property type="evidence" value="ECO:0000314"/>
    <property type="project" value="ARUK-UCL"/>
</dbReference>
<dbReference type="GO" id="GO:0140566">
    <property type="term" value="F:histone reader activity"/>
    <property type="evidence" value="ECO:0000314"/>
    <property type="project" value="UniProtKB"/>
</dbReference>
<dbReference type="GO" id="GO:0008270">
    <property type="term" value="F:zinc ion binding"/>
    <property type="evidence" value="ECO:0007669"/>
    <property type="project" value="UniProtKB-KW"/>
</dbReference>
<dbReference type="GO" id="GO:0030154">
    <property type="term" value="P:cell differentiation"/>
    <property type="evidence" value="ECO:0007669"/>
    <property type="project" value="UniProtKB-KW"/>
</dbReference>
<dbReference type="GO" id="GO:1990918">
    <property type="term" value="P:double-strand break repair involved in meiotic recombination"/>
    <property type="evidence" value="ECO:0000315"/>
    <property type="project" value="UniProtKB"/>
</dbReference>
<dbReference type="GO" id="GO:0007129">
    <property type="term" value="P:homologous chromosome pairing at meiosis"/>
    <property type="evidence" value="ECO:0000315"/>
    <property type="project" value="UniProtKB"/>
</dbReference>
<dbReference type="GO" id="GO:0007127">
    <property type="term" value="P:meiosis I"/>
    <property type="evidence" value="ECO:0000315"/>
    <property type="project" value="ARUK-UCL"/>
</dbReference>
<dbReference type="GO" id="GO:0045911">
    <property type="term" value="P:positive regulation of DNA recombination"/>
    <property type="evidence" value="ECO:0000315"/>
    <property type="project" value="ARUK-UCL"/>
</dbReference>
<dbReference type="GO" id="GO:2000781">
    <property type="term" value="P:positive regulation of double-strand break repair"/>
    <property type="evidence" value="ECO:0000315"/>
    <property type="project" value="UniProtKB"/>
</dbReference>
<dbReference type="GO" id="GO:0007283">
    <property type="term" value="P:spermatogenesis"/>
    <property type="evidence" value="ECO:0000315"/>
    <property type="project" value="ARUK-UCL"/>
</dbReference>
<dbReference type="CDD" id="cd20145">
    <property type="entry name" value="PWWP_ZCWPW1"/>
    <property type="match status" value="1"/>
</dbReference>
<dbReference type="Gene3D" id="2.30.30.140">
    <property type="match status" value="1"/>
</dbReference>
<dbReference type="Gene3D" id="3.30.40.100">
    <property type="match status" value="1"/>
</dbReference>
<dbReference type="InterPro" id="IPR000313">
    <property type="entry name" value="PWWP_dom"/>
</dbReference>
<dbReference type="InterPro" id="IPR042778">
    <property type="entry name" value="ZCWPW1/ZCWPW2"/>
</dbReference>
<dbReference type="InterPro" id="IPR011124">
    <property type="entry name" value="Znf_CW"/>
</dbReference>
<dbReference type="PANTHER" id="PTHR15999">
    <property type="entry name" value="ZINC FINGER CW-TYPE PWWP DOMAIN PROTEIN 1"/>
    <property type="match status" value="1"/>
</dbReference>
<dbReference type="PANTHER" id="PTHR15999:SF2">
    <property type="entry name" value="ZINC FINGER CW-TYPE PWWP DOMAIN PROTEIN 1"/>
    <property type="match status" value="1"/>
</dbReference>
<dbReference type="Pfam" id="PF00855">
    <property type="entry name" value="PWWP"/>
    <property type="match status" value="1"/>
</dbReference>
<dbReference type="Pfam" id="PF07496">
    <property type="entry name" value="zf-CW"/>
    <property type="match status" value="1"/>
</dbReference>
<dbReference type="SMART" id="SM00293">
    <property type="entry name" value="PWWP"/>
    <property type="match status" value="1"/>
</dbReference>
<dbReference type="SUPFAM" id="SSF63748">
    <property type="entry name" value="Tudor/PWWP/MBT"/>
    <property type="match status" value="1"/>
</dbReference>
<dbReference type="PROSITE" id="PS50812">
    <property type="entry name" value="PWWP"/>
    <property type="match status" value="1"/>
</dbReference>
<dbReference type="PROSITE" id="PS51050">
    <property type="entry name" value="ZF_CW"/>
    <property type="match status" value="1"/>
</dbReference>